<reference key="1">
    <citation type="journal article" date="2006" name="PLoS Biol.">
        <title>Metabolic complementarity and genomics of the dual bacterial symbiosis of sharpshooters.</title>
        <authorList>
            <person name="Wu D."/>
            <person name="Daugherty S.C."/>
            <person name="Van Aken S.E."/>
            <person name="Pai G.H."/>
            <person name="Watkins K.L."/>
            <person name="Khouri H."/>
            <person name="Tallon L.J."/>
            <person name="Zaborsky J.M."/>
            <person name="Dunbar H.E."/>
            <person name="Tran P.L."/>
            <person name="Moran N.A."/>
            <person name="Eisen J.A."/>
        </authorList>
    </citation>
    <scope>NUCLEOTIDE SEQUENCE [LARGE SCALE GENOMIC DNA]</scope>
</reference>
<protein>
    <recommendedName>
        <fullName evidence="1">Trigger factor</fullName>
        <shortName evidence="1">TF</shortName>
        <ecNumber evidence="1">5.2.1.8</ecNumber>
    </recommendedName>
    <alternativeName>
        <fullName evidence="1">PPIase</fullName>
    </alternativeName>
</protein>
<keyword id="KW-0131">Cell cycle</keyword>
<keyword id="KW-0132">Cell division</keyword>
<keyword id="KW-0143">Chaperone</keyword>
<keyword id="KW-0963">Cytoplasm</keyword>
<keyword id="KW-0413">Isomerase</keyword>
<keyword id="KW-1185">Reference proteome</keyword>
<keyword id="KW-0697">Rotamase</keyword>
<organism>
    <name type="scientific">Baumannia cicadellinicola subsp. Homalodisca coagulata</name>
    <dbReference type="NCBI Taxonomy" id="374463"/>
    <lineage>
        <taxon>Bacteria</taxon>
        <taxon>Pseudomonadati</taxon>
        <taxon>Pseudomonadota</taxon>
        <taxon>Gammaproteobacteria</taxon>
        <taxon>Candidatus Palibaumannia</taxon>
    </lineage>
</organism>
<accession>Q1LTJ8</accession>
<comment type="function">
    <text evidence="1">Involved in protein export. Acts as a chaperone by maintaining the newly synthesized protein in an open conformation. Functions as a peptidyl-prolyl cis-trans isomerase.</text>
</comment>
<comment type="catalytic activity">
    <reaction evidence="1">
        <text>[protein]-peptidylproline (omega=180) = [protein]-peptidylproline (omega=0)</text>
        <dbReference type="Rhea" id="RHEA:16237"/>
        <dbReference type="Rhea" id="RHEA-COMP:10747"/>
        <dbReference type="Rhea" id="RHEA-COMP:10748"/>
        <dbReference type="ChEBI" id="CHEBI:83833"/>
        <dbReference type="ChEBI" id="CHEBI:83834"/>
        <dbReference type="EC" id="5.2.1.8"/>
    </reaction>
</comment>
<comment type="subcellular location">
    <subcellularLocation>
        <location>Cytoplasm</location>
    </subcellularLocation>
    <text evidence="1">About half TF is bound to the ribosome near the polypeptide exit tunnel while the other half is free in the cytoplasm.</text>
</comment>
<comment type="domain">
    <text evidence="1">Consists of 3 domains; the N-terminus binds the ribosome, the middle domain has PPIase activity, while the C-terminus has intrinsic chaperone activity on its own.</text>
</comment>
<comment type="similarity">
    <text evidence="1">Belongs to the FKBP-type PPIase family. Tig subfamily.</text>
</comment>
<feature type="chain" id="PRO_0000256530" description="Trigger factor">
    <location>
        <begin position="1"/>
        <end position="436"/>
    </location>
</feature>
<feature type="domain" description="PPIase FKBP-type" evidence="1">
    <location>
        <begin position="161"/>
        <end position="248"/>
    </location>
</feature>
<name>TIG_BAUCH</name>
<proteinExistence type="inferred from homology"/>
<gene>
    <name evidence="1" type="primary">tig</name>
    <name type="ordered locus">BCI_0266</name>
</gene>
<evidence type="ECO:0000255" key="1">
    <source>
        <dbReference type="HAMAP-Rule" id="MF_00303"/>
    </source>
</evidence>
<sequence>MQILVDHSQKLRRSVTMKIASHIIEETISKKLLELAKTVVIDGFRKGKAPIHIVAKRYHNYLCQDVLYQLMHQQFIAAMLKEKINVISTPNYTYSTYQKDKDLIYQVEFEISPQVELKGIDTITVEKPLVQIKETDIDAMLTQLIKQNGSWEKTNNAAKITDRVTIDLYGTIENKRLKGSQAKNLNFTIGINNKHIIPGLENGIIGHKAGDNFNINIYLPDEYFPLELRGKLAIFTVALKKVEQYRLPHLDESFIKLLGVVDGTVEGLRNKIRKDIEVLLKNAVRNYIKEQVINYLLSVNNIDVPDIMIEQEIQIIKQKNTKHIGRIRKSALEQSRELIEAQAKRRIQITLLLIEIIKQHDIKVNTARMRAIMEEMAYLSPQKQEIINSYNSQSSMRRQISNIVLEEQAIEALLMKANVIEKKIDFADFMSKLSHS</sequence>
<dbReference type="EC" id="5.2.1.8" evidence="1"/>
<dbReference type="EMBL" id="CP000238">
    <property type="protein sequence ID" value="ABF13935.1"/>
    <property type="molecule type" value="Genomic_DNA"/>
</dbReference>
<dbReference type="RefSeq" id="WP_011520449.1">
    <property type="nucleotide sequence ID" value="NC_007984.1"/>
</dbReference>
<dbReference type="SMR" id="Q1LTJ8"/>
<dbReference type="STRING" id="374463.BCI_0266"/>
<dbReference type="KEGG" id="bci:BCI_0266"/>
<dbReference type="HOGENOM" id="CLU_033058_2_0_6"/>
<dbReference type="OrthoDB" id="9767721at2"/>
<dbReference type="Proteomes" id="UP000002427">
    <property type="component" value="Chromosome"/>
</dbReference>
<dbReference type="GO" id="GO:0005737">
    <property type="term" value="C:cytoplasm"/>
    <property type="evidence" value="ECO:0007669"/>
    <property type="project" value="UniProtKB-SubCell"/>
</dbReference>
<dbReference type="GO" id="GO:0003755">
    <property type="term" value="F:peptidyl-prolyl cis-trans isomerase activity"/>
    <property type="evidence" value="ECO:0007669"/>
    <property type="project" value="UniProtKB-UniRule"/>
</dbReference>
<dbReference type="GO" id="GO:0044183">
    <property type="term" value="F:protein folding chaperone"/>
    <property type="evidence" value="ECO:0007669"/>
    <property type="project" value="TreeGrafter"/>
</dbReference>
<dbReference type="GO" id="GO:0043022">
    <property type="term" value="F:ribosome binding"/>
    <property type="evidence" value="ECO:0007669"/>
    <property type="project" value="TreeGrafter"/>
</dbReference>
<dbReference type="GO" id="GO:0051083">
    <property type="term" value="P:'de novo' cotranslational protein folding"/>
    <property type="evidence" value="ECO:0007669"/>
    <property type="project" value="TreeGrafter"/>
</dbReference>
<dbReference type="GO" id="GO:0051301">
    <property type="term" value="P:cell division"/>
    <property type="evidence" value="ECO:0007669"/>
    <property type="project" value="UniProtKB-KW"/>
</dbReference>
<dbReference type="GO" id="GO:0061077">
    <property type="term" value="P:chaperone-mediated protein folding"/>
    <property type="evidence" value="ECO:0007669"/>
    <property type="project" value="TreeGrafter"/>
</dbReference>
<dbReference type="GO" id="GO:0015031">
    <property type="term" value="P:protein transport"/>
    <property type="evidence" value="ECO:0007669"/>
    <property type="project" value="UniProtKB-UniRule"/>
</dbReference>
<dbReference type="GO" id="GO:0043335">
    <property type="term" value="P:protein unfolding"/>
    <property type="evidence" value="ECO:0007669"/>
    <property type="project" value="TreeGrafter"/>
</dbReference>
<dbReference type="Gene3D" id="3.10.50.40">
    <property type="match status" value="1"/>
</dbReference>
<dbReference type="Gene3D" id="3.30.70.1050">
    <property type="entry name" value="Trigger factor ribosome-binding domain"/>
    <property type="match status" value="1"/>
</dbReference>
<dbReference type="Gene3D" id="1.10.3120.10">
    <property type="entry name" value="Trigger factor, C-terminal domain"/>
    <property type="match status" value="1"/>
</dbReference>
<dbReference type="HAMAP" id="MF_00303">
    <property type="entry name" value="Trigger_factor_Tig"/>
    <property type="match status" value="1"/>
</dbReference>
<dbReference type="InterPro" id="IPR046357">
    <property type="entry name" value="PPIase_dom_sf"/>
</dbReference>
<dbReference type="InterPro" id="IPR001179">
    <property type="entry name" value="PPIase_FKBP_dom"/>
</dbReference>
<dbReference type="InterPro" id="IPR005215">
    <property type="entry name" value="Trig_fac"/>
</dbReference>
<dbReference type="InterPro" id="IPR008880">
    <property type="entry name" value="Trigger_fac_C"/>
</dbReference>
<dbReference type="InterPro" id="IPR037041">
    <property type="entry name" value="Trigger_fac_C_sf"/>
</dbReference>
<dbReference type="InterPro" id="IPR008881">
    <property type="entry name" value="Trigger_fac_ribosome-bd_bac"/>
</dbReference>
<dbReference type="InterPro" id="IPR036611">
    <property type="entry name" value="Trigger_fac_ribosome-bd_sf"/>
</dbReference>
<dbReference type="InterPro" id="IPR027304">
    <property type="entry name" value="Trigger_fact/SurA_dom_sf"/>
</dbReference>
<dbReference type="NCBIfam" id="TIGR00115">
    <property type="entry name" value="tig"/>
    <property type="match status" value="1"/>
</dbReference>
<dbReference type="PANTHER" id="PTHR30560">
    <property type="entry name" value="TRIGGER FACTOR CHAPERONE AND PEPTIDYL-PROLYL CIS/TRANS ISOMERASE"/>
    <property type="match status" value="1"/>
</dbReference>
<dbReference type="PANTHER" id="PTHR30560:SF3">
    <property type="entry name" value="TRIGGER FACTOR-LIKE PROTEIN TIG, CHLOROPLASTIC"/>
    <property type="match status" value="1"/>
</dbReference>
<dbReference type="Pfam" id="PF00254">
    <property type="entry name" value="FKBP_C"/>
    <property type="match status" value="1"/>
</dbReference>
<dbReference type="Pfam" id="PF05698">
    <property type="entry name" value="Trigger_C"/>
    <property type="match status" value="1"/>
</dbReference>
<dbReference type="Pfam" id="PF05697">
    <property type="entry name" value="Trigger_N"/>
    <property type="match status" value="1"/>
</dbReference>
<dbReference type="PIRSF" id="PIRSF003095">
    <property type="entry name" value="Trigger_factor"/>
    <property type="match status" value="1"/>
</dbReference>
<dbReference type="SUPFAM" id="SSF54534">
    <property type="entry name" value="FKBP-like"/>
    <property type="match status" value="1"/>
</dbReference>
<dbReference type="SUPFAM" id="SSF109998">
    <property type="entry name" value="Triger factor/SurA peptide-binding domain-like"/>
    <property type="match status" value="1"/>
</dbReference>
<dbReference type="SUPFAM" id="SSF102735">
    <property type="entry name" value="Trigger factor ribosome-binding domain"/>
    <property type="match status" value="1"/>
</dbReference>
<dbReference type="PROSITE" id="PS50059">
    <property type="entry name" value="FKBP_PPIASE"/>
    <property type="match status" value="1"/>
</dbReference>